<name>LSG1_SCHPO</name>
<keyword id="KW-0963">Cytoplasm</keyword>
<keyword id="KW-0342">GTP-binding</keyword>
<keyword id="KW-0378">Hydrolase</keyword>
<keyword id="KW-0547">Nucleotide-binding</keyword>
<keyword id="KW-0653">Protein transport</keyword>
<keyword id="KW-1185">Reference proteome</keyword>
<keyword id="KW-0813">Transport</keyword>
<protein>
    <recommendedName>
        <fullName>Large subunit GTPase 1</fullName>
        <ecNumber>3.6.1.-</ecNumber>
    </recommendedName>
</protein>
<evidence type="ECO:0000250" key="1"/>
<evidence type="ECO:0000255" key="2"/>
<evidence type="ECO:0000255" key="3">
    <source>
        <dbReference type="PROSITE-ProRule" id="PRU01058"/>
    </source>
</evidence>
<evidence type="ECO:0000256" key="4">
    <source>
        <dbReference type="SAM" id="MobiDB-lite"/>
    </source>
</evidence>
<accession>Q10190</accession>
<comment type="function">
    <text evidence="1">GTPase required for the nuclear export of the 60S ribosomal subunit. Acts by mediating the release of nmd3 from the 60S ribosomal subunit after export into the cytoplasm (By similarity).</text>
</comment>
<comment type="subcellular location">
    <subcellularLocation>
        <location evidence="1">Cytoplasm</location>
    </subcellularLocation>
</comment>
<comment type="domain">
    <text>In contrast to other GTP-binding proteins, this family is characterized by a circular permutation of the GTPase motifs described by a G4-G1-G3 pattern.</text>
</comment>
<comment type="similarity">
    <text evidence="3">Belongs to the TRAFAC class YlqF/YawG GTPase family. LSG1 subfamily.</text>
</comment>
<dbReference type="EC" id="3.6.1.-"/>
<dbReference type="EMBL" id="CU329670">
    <property type="protein sequence ID" value="CAA93314.1"/>
    <property type="molecule type" value="Genomic_DNA"/>
</dbReference>
<dbReference type="PIR" id="T38717">
    <property type="entry name" value="T38717"/>
</dbReference>
<dbReference type="RefSeq" id="NP_593948.1">
    <property type="nucleotide sequence ID" value="NM_001019375.2"/>
</dbReference>
<dbReference type="SMR" id="Q10190"/>
<dbReference type="BioGRID" id="277954">
    <property type="interactions" value="1"/>
</dbReference>
<dbReference type="FunCoup" id="Q10190">
    <property type="interactions" value="1133"/>
</dbReference>
<dbReference type="STRING" id="284812.Q10190"/>
<dbReference type="iPTMnet" id="Q10190"/>
<dbReference type="PaxDb" id="4896-SPAC3F10.16c.1"/>
<dbReference type="EnsemblFungi" id="SPAC3F10.16c.1">
    <property type="protein sequence ID" value="SPAC3F10.16c.1:pep"/>
    <property type="gene ID" value="SPAC3F10.16c"/>
</dbReference>
<dbReference type="KEGG" id="spo:2541449"/>
<dbReference type="PomBase" id="SPAC3F10.16c"/>
<dbReference type="VEuPathDB" id="FungiDB:SPAC3F10.16c"/>
<dbReference type="eggNOG" id="KOG1424">
    <property type="taxonomic scope" value="Eukaryota"/>
</dbReference>
<dbReference type="HOGENOM" id="CLU_011072_5_0_1"/>
<dbReference type="InParanoid" id="Q10190"/>
<dbReference type="OMA" id="VNKADMM"/>
<dbReference type="PhylomeDB" id="Q10190"/>
<dbReference type="PRO" id="PR:Q10190"/>
<dbReference type="Proteomes" id="UP000002485">
    <property type="component" value="Chromosome I"/>
</dbReference>
<dbReference type="GO" id="GO:0005829">
    <property type="term" value="C:cytosol"/>
    <property type="evidence" value="ECO:0007005"/>
    <property type="project" value="PomBase"/>
</dbReference>
<dbReference type="GO" id="GO:0005525">
    <property type="term" value="F:GTP binding"/>
    <property type="evidence" value="ECO:0000303"/>
    <property type="project" value="PomBase"/>
</dbReference>
<dbReference type="GO" id="GO:0003924">
    <property type="term" value="F:GTPase activity"/>
    <property type="evidence" value="ECO:0000318"/>
    <property type="project" value="GO_Central"/>
</dbReference>
<dbReference type="GO" id="GO:0180023">
    <property type="term" value="P:cytosolic large ribosomal subunit assembly"/>
    <property type="evidence" value="ECO:0000266"/>
    <property type="project" value="PomBase"/>
</dbReference>
<dbReference type="GO" id="GO:0015031">
    <property type="term" value="P:protein transport"/>
    <property type="evidence" value="ECO:0007669"/>
    <property type="project" value="UniProtKB-KW"/>
</dbReference>
<dbReference type="GO" id="GO:0000054">
    <property type="term" value="P:ribosomal subunit export from nucleus"/>
    <property type="evidence" value="ECO:0000318"/>
    <property type="project" value="GO_Central"/>
</dbReference>
<dbReference type="CDD" id="cd01857">
    <property type="entry name" value="HSR1_MMR1"/>
    <property type="match status" value="1"/>
</dbReference>
<dbReference type="FunFam" id="3.40.50.300:FF:001151">
    <property type="entry name" value="Large subunit GTPase 1"/>
    <property type="match status" value="1"/>
</dbReference>
<dbReference type="Gene3D" id="1.10.1580.10">
    <property type="match status" value="1"/>
</dbReference>
<dbReference type="Gene3D" id="3.40.50.300">
    <property type="entry name" value="P-loop containing nucleotide triphosphate hydrolases"/>
    <property type="match status" value="1"/>
</dbReference>
<dbReference type="InterPro" id="IPR030378">
    <property type="entry name" value="G_CP_dom"/>
</dbReference>
<dbReference type="InterPro" id="IPR043358">
    <property type="entry name" value="GNL1-like"/>
</dbReference>
<dbReference type="InterPro" id="IPR006073">
    <property type="entry name" value="GTP-bd"/>
</dbReference>
<dbReference type="InterPro" id="IPR023179">
    <property type="entry name" value="GTP-bd_ortho_bundle_sf"/>
</dbReference>
<dbReference type="InterPro" id="IPR027417">
    <property type="entry name" value="P-loop_NTPase"/>
</dbReference>
<dbReference type="PANTHER" id="PTHR45709:SF2">
    <property type="entry name" value="LARGE SUBUNIT GTPASE 1 HOMOLOG"/>
    <property type="match status" value="1"/>
</dbReference>
<dbReference type="PANTHER" id="PTHR45709">
    <property type="entry name" value="LARGE SUBUNIT GTPASE 1 HOMOLOG-RELATED"/>
    <property type="match status" value="1"/>
</dbReference>
<dbReference type="Pfam" id="PF01926">
    <property type="entry name" value="MMR_HSR1"/>
    <property type="match status" value="1"/>
</dbReference>
<dbReference type="SUPFAM" id="SSF52540">
    <property type="entry name" value="P-loop containing nucleoside triphosphate hydrolases"/>
    <property type="match status" value="1"/>
</dbReference>
<dbReference type="PROSITE" id="PS51721">
    <property type="entry name" value="G_CP"/>
    <property type="match status" value="1"/>
</dbReference>
<reference key="1">
    <citation type="journal article" date="2002" name="Nature">
        <title>The genome sequence of Schizosaccharomyces pombe.</title>
        <authorList>
            <person name="Wood V."/>
            <person name="Gwilliam R."/>
            <person name="Rajandream M.A."/>
            <person name="Lyne M.H."/>
            <person name="Lyne R."/>
            <person name="Stewart A."/>
            <person name="Sgouros J.G."/>
            <person name="Peat N."/>
            <person name="Hayles J."/>
            <person name="Baker S.G."/>
            <person name="Basham D."/>
            <person name="Bowman S."/>
            <person name="Brooks K."/>
            <person name="Brown D."/>
            <person name="Brown S."/>
            <person name="Chillingworth T."/>
            <person name="Churcher C.M."/>
            <person name="Collins M."/>
            <person name="Connor R."/>
            <person name="Cronin A."/>
            <person name="Davis P."/>
            <person name="Feltwell T."/>
            <person name="Fraser A."/>
            <person name="Gentles S."/>
            <person name="Goble A."/>
            <person name="Hamlin N."/>
            <person name="Harris D.E."/>
            <person name="Hidalgo J."/>
            <person name="Hodgson G."/>
            <person name="Holroyd S."/>
            <person name="Hornsby T."/>
            <person name="Howarth S."/>
            <person name="Huckle E.J."/>
            <person name="Hunt S."/>
            <person name="Jagels K."/>
            <person name="James K.D."/>
            <person name="Jones L."/>
            <person name="Jones M."/>
            <person name="Leather S."/>
            <person name="McDonald S."/>
            <person name="McLean J."/>
            <person name="Mooney P."/>
            <person name="Moule S."/>
            <person name="Mungall K.L."/>
            <person name="Murphy L.D."/>
            <person name="Niblett D."/>
            <person name="Odell C."/>
            <person name="Oliver K."/>
            <person name="O'Neil S."/>
            <person name="Pearson D."/>
            <person name="Quail M.A."/>
            <person name="Rabbinowitsch E."/>
            <person name="Rutherford K.M."/>
            <person name="Rutter S."/>
            <person name="Saunders D."/>
            <person name="Seeger K."/>
            <person name="Sharp S."/>
            <person name="Skelton J."/>
            <person name="Simmonds M.N."/>
            <person name="Squares R."/>
            <person name="Squares S."/>
            <person name="Stevens K."/>
            <person name="Taylor K."/>
            <person name="Taylor R.G."/>
            <person name="Tivey A."/>
            <person name="Walsh S.V."/>
            <person name="Warren T."/>
            <person name="Whitehead S."/>
            <person name="Woodward J.R."/>
            <person name="Volckaert G."/>
            <person name="Aert R."/>
            <person name="Robben J."/>
            <person name="Grymonprez B."/>
            <person name="Weltjens I."/>
            <person name="Vanstreels E."/>
            <person name="Rieger M."/>
            <person name="Schaefer M."/>
            <person name="Mueller-Auer S."/>
            <person name="Gabel C."/>
            <person name="Fuchs M."/>
            <person name="Duesterhoeft A."/>
            <person name="Fritzc C."/>
            <person name="Holzer E."/>
            <person name="Moestl D."/>
            <person name="Hilbert H."/>
            <person name="Borzym K."/>
            <person name="Langer I."/>
            <person name="Beck A."/>
            <person name="Lehrach H."/>
            <person name="Reinhardt R."/>
            <person name="Pohl T.M."/>
            <person name="Eger P."/>
            <person name="Zimmermann W."/>
            <person name="Wedler H."/>
            <person name="Wambutt R."/>
            <person name="Purnelle B."/>
            <person name="Goffeau A."/>
            <person name="Cadieu E."/>
            <person name="Dreano S."/>
            <person name="Gloux S."/>
            <person name="Lelaure V."/>
            <person name="Mottier S."/>
            <person name="Galibert F."/>
            <person name="Aves S.J."/>
            <person name="Xiang Z."/>
            <person name="Hunt C."/>
            <person name="Moore K."/>
            <person name="Hurst S.M."/>
            <person name="Lucas M."/>
            <person name="Rochet M."/>
            <person name="Gaillardin C."/>
            <person name="Tallada V.A."/>
            <person name="Garzon A."/>
            <person name="Thode G."/>
            <person name="Daga R.R."/>
            <person name="Cruzado L."/>
            <person name="Jimenez J."/>
            <person name="Sanchez M."/>
            <person name="del Rey F."/>
            <person name="Benito J."/>
            <person name="Dominguez A."/>
            <person name="Revuelta J.L."/>
            <person name="Moreno S."/>
            <person name="Armstrong J."/>
            <person name="Forsburg S.L."/>
            <person name="Cerutti L."/>
            <person name="Lowe T."/>
            <person name="McCombie W.R."/>
            <person name="Paulsen I."/>
            <person name="Potashkin J."/>
            <person name="Shpakovski G.V."/>
            <person name="Ussery D."/>
            <person name="Barrell B.G."/>
            <person name="Nurse P."/>
        </authorList>
    </citation>
    <scope>NUCLEOTIDE SEQUENCE [LARGE SCALE GENOMIC DNA]</scope>
    <source>
        <strain>972 / ATCC 24843</strain>
    </source>
</reference>
<gene>
    <name type="primary">lsg1</name>
    <name type="ORF">SPAC3F10.16c</name>
</gene>
<feature type="chain" id="PRO_0000122453" description="Large subunit GTPase 1">
    <location>
        <begin position="1"/>
        <end position="616"/>
    </location>
</feature>
<feature type="domain" description="CP-type G" evidence="3">
    <location>
        <begin position="161"/>
        <end position="359"/>
    </location>
</feature>
<feature type="region of interest" description="Disordered" evidence="4">
    <location>
        <begin position="247"/>
        <end position="269"/>
    </location>
</feature>
<feature type="region of interest" description="Disordered" evidence="4">
    <location>
        <begin position="552"/>
        <end position="574"/>
    </location>
</feature>
<feature type="region of interest" description="Disordered" evidence="4">
    <location>
        <begin position="587"/>
        <end position="616"/>
    </location>
</feature>
<feature type="compositionally biased region" description="Basic residues" evidence="4">
    <location>
        <begin position="595"/>
        <end position="607"/>
    </location>
</feature>
<feature type="binding site" evidence="2">
    <location>
        <begin position="209"/>
        <end position="212"/>
    </location>
    <ligand>
        <name>GTP</name>
        <dbReference type="ChEBI" id="CHEBI:37565"/>
    </ligand>
</feature>
<feature type="binding site" evidence="2">
    <location>
        <begin position="308"/>
        <end position="315"/>
    </location>
    <ligand>
        <name>GTP</name>
        <dbReference type="ChEBI" id="CHEBI:37565"/>
    </ligand>
</feature>
<feature type="binding site" evidence="2">
    <location>
        <begin position="352"/>
        <end position="355"/>
    </location>
    <ligand>
        <name>GTP</name>
        <dbReference type="ChEBI" id="CHEBI:37565"/>
    </ligand>
</feature>
<proteinExistence type="inferred from homology"/>
<sequence>MVLPKSKNQIGLGRAIQSDFTKNRRNRKGGLKHIVDSDPKAHRAALRSVTHETDLDEFLNTAELGEVEFIAEKQNVTVIQNPEQNPFLLSKEEAARSKQKQEKNKDRLTIPRRPHWDQTTTAVELDRMERESFLNWRRNLAQLQDVEGFIVTPFERNLEIWRQLWRVIERSDVVVQIVDARNPLFFRSAHLEQYVKEVGPSKKNFLLVNKADMLTEEQRNYWSSYFNENNIPFLFFSARMAAEANERGEDLETYESTSSNEIPESLQADENDVHSSRIATLKVLEGIFEKFASTLPDGKTKMTFGLVGYPNVGKSSTINALVGSKKVSVSSTPGKTKHFQTINLSEKVSLLDCPGLVFPSFATTQADLVLDGVLPIDQLREYTGPSALMAERIPKEVLETLYTIRIRIKPIEEGGTGVPSAQEVLFPFARSRGFMRAHHGTPDDSRAARILLKDYVNGKLLYVHPPPNYPNSGSEFNKEHHQKIVSATSDSITEKLQRTAISDNTLSAESQLVDDEYFQENPHVRPMVKGTAVAMQGPVYKGRNTMQPFQRRLNDDASPKYPMNAQGKPLSRRKARQLTALELGVSPEALSSATSKKHNKKNKRSKQRSGVVIDDY</sequence>
<organism>
    <name type="scientific">Schizosaccharomyces pombe (strain 972 / ATCC 24843)</name>
    <name type="common">Fission yeast</name>
    <dbReference type="NCBI Taxonomy" id="284812"/>
    <lineage>
        <taxon>Eukaryota</taxon>
        <taxon>Fungi</taxon>
        <taxon>Dikarya</taxon>
        <taxon>Ascomycota</taxon>
        <taxon>Taphrinomycotina</taxon>
        <taxon>Schizosaccharomycetes</taxon>
        <taxon>Schizosaccharomycetales</taxon>
        <taxon>Schizosaccharomycetaceae</taxon>
        <taxon>Schizosaccharomyces</taxon>
    </lineage>
</organism>